<protein>
    <recommendedName>
        <fullName evidence="1">Phosphoribosylformylglycinamidine cyclo-ligase</fullName>
        <ecNumber evidence="1">6.3.3.1</ecNumber>
    </recommendedName>
    <alternativeName>
        <fullName evidence="1">AIR synthase</fullName>
    </alternativeName>
    <alternativeName>
        <fullName evidence="1">AIRS</fullName>
    </alternativeName>
    <alternativeName>
        <fullName evidence="1">Phosphoribosyl-aminoimidazole synthetase</fullName>
    </alternativeName>
</protein>
<keyword id="KW-0067">ATP-binding</keyword>
<keyword id="KW-0963">Cytoplasm</keyword>
<keyword id="KW-0436">Ligase</keyword>
<keyword id="KW-0547">Nucleotide-binding</keyword>
<keyword id="KW-0658">Purine biosynthesis</keyword>
<comment type="catalytic activity">
    <reaction evidence="1">
        <text>2-formamido-N(1)-(5-O-phospho-beta-D-ribosyl)acetamidine + ATP = 5-amino-1-(5-phospho-beta-D-ribosyl)imidazole + ADP + phosphate + H(+)</text>
        <dbReference type="Rhea" id="RHEA:23032"/>
        <dbReference type="ChEBI" id="CHEBI:15378"/>
        <dbReference type="ChEBI" id="CHEBI:30616"/>
        <dbReference type="ChEBI" id="CHEBI:43474"/>
        <dbReference type="ChEBI" id="CHEBI:137981"/>
        <dbReference type="ChEBI" id="CHEBI:147287"/>
        <dbReference type="ChEBI" id="CHEBI:456216"/>
        <dbReference type="EC" id="6.3.3.1"/>
    </reaction>
</comment>
<comment type="pathway">
    <text evidence="1">Purine metabolism; IMP biosynthesis via de novo pathway; 5-amino-1-(5-phospho-D-ribosyl)imidazole from N(2)-formyl-N(1)-(5-phospho-D-ribosyl)glycinamide: step 2/2.</text>
</comment>
<comment type="subcellular location">
    <subcellularLocation>
        <location evidence="1">Cytoplasm</location>
    </subcellularLocation>
</comment>
<comment type="similarity">
    <text evidence="1">Belongs to the AIR synthase family.</text>
</comment>
<evidence type="ECO:0000255" key="1">
    <source>
        <dbReference type="HAMAP-Rule" id="MF_00741"/>
    </source>
</evidence>
<evidence type="ECO:0000256" key="2">
    <source>
        <dbReference type="SAM" id="MobiDB-lite"/>
    </source>
</evidence>
<accession>Q984K6</accession>
<name>PUR5_RHILO</name>
<dbReference type="EC" id="6.3.3.1" evidence="1"/>
<dbReference type="EMBL" id="BA000012">
    <property type="protein sequence ID" value="BAB53624.1"/>
    <property type="molecule type" value="Genomic_DNA"/>
</dbReference>
<dbReference type="RefSeq" id="WP_010915250.1">
    <property type="nucleotide sequence ID" value="NC_002678.2"/>
</dbReference>
<dbReference type="SMR" id="Q984K6"/>
<dbReference type="GeneID" id="66684871"/>
<dbReference type="KEGG" id="mlo:mll7962"/>
<dbReference type="eggNOG" id="COG0150">
    <property type="taxonomic scope" value="Bacteria"/>
</dbReference>
<dbReference type="HOGENOM" id="CLU_047116_0_0_5"/>
<dbReference type="UniPathway" id="UPA00074">
    <property type="reaction ID" value="UER00129"/>
</dbReference>
<dbReference type="Proteomes" id="UP000000552">
    <property type="component" value="Chromosome"/>
</dbReference>
<dbReference type="GO" id="GO:0005829">
    <property type="term" value="C:cytosol"/>
    <property type="evidence" value="ECO:0007669"/>
    <property type="project" value="TreeGrafter"/>
</dbReference>
<dbReference type="GO" id="GO:0005524">
    <property type="term" value="F:ATP binding"/>
    <property type="evidence" value="ECO:0007669"/>
    <property type="project" value="UniProtKB-KW"/>
</dbReference>
<dbReference type="GO" id="GO:0004637">
    <property type="term" value="F:phosphoribosylamine-glycine ligase activity"/>
    <property type="evidence" value="ECO:0007669"/>
    <property type="project" value="TreeGrafter"/>
</dbReference>
<dbReference type="GO" id="GO:0004641">
    <property type="term" value="F:phosphoribosylformylglycinamidine cyclo-ligase activity"/>
    <property type="evidence" value="ECO:0007669"/>
    <property type="project" value="UniProtKB-UniRule"/>
</dbReference>
<dbReference type="GO" id="GO:0006189">
    <property type="term" value="P:'de novo' IMP biosynthetic process"/>
    <property type="evidence" value="ECO:0007669"/>
    <property type="project" value="UniProtKB-UniRule"/>
</dbReference>
<dbReference type="GO" id="GO:0046084">
    <property type="term" value="P:adenine biosynthetic process"/>
    <property type="evidence" value="ECO:0007669"/>
    <property type="project" value="TreeGrafter"/>
</dbReference>
<dbReference type="CDD" id="cd02196">
    <property type="entry name" value="PurM"/>
    <property type="match status" value="1"/>
</dbReference>
<dbReference type="FunFam" id="3.30.1330.10:FF:000001">
    <property type="entry name" value="Phosphoribosylformylglycinamidine cyclo-ligase"/>
    <property type="match status" value="1"/>
</dbReference>
<dbReference type="FunFam" id="3.90.650.10:FF:000007">
    <property type="entry name" value="Trifunctional purine biosynthetic protein adenosine-3"/>
    <property type="match status" value="1"/>
</dbReference>
<dbReference type="Gene3D" id="3.90.650.10">
    <property type="entry name" value="PurM-like C-terminal domain"/>
    <property type="match status" value="1"/>
</dbReference>
<dbReference type="Gene3D" id="3.30.1330.10">
    <property type="entry name" value="PurM-like, N-terminal domain"/>
    <property type="match status" value="1"/>
</dbReference>
<dbReference type="HAMAP" id="MF_00741">
    <property type="entry name" value="AIRS"/>
    <property type="match status" value="1"/>
</dbReference>
<dbReference type="InterPro" id="IPR010918">
    <property type="entry name" value="PurM-like_C_dom"/>
</dbReference>
<dbReference type="InterPro" id="IPR036676">
    <property type="entry name" value="PurM-like_C_sf"/>
</dbReference>
<dbReference type="InterPro" id="IPR016188">
    <property type="entry name" value="PurM-like_N"/>
</dbReference>
<dbReference type="InterPro" id="IPR036921">
    <property type="entry name" value="PurM-like_N_sf"/>
</dbReference>
<dbReference type="InterPro" id="IPR004733">
    <property type="entry name" value="PurM_cligase"/>
</dbReference>
<dbReference type="NCBIfam" id="TIGR00878">
    <property type="entry name" value="purM"/>
    <property type="match status" value="1"/>
</dbReference>
<dbReference type="PANTHER" id="PTHR10520:SF12">
    <property type="entry name" value="TRIFUNCTIONAL PURINE BIOSYNTHETIC PROTEIN ADENOSINE-3"/>
    <property type="match status" value="1"/>
</dbReference>
<dbReference type="PANTHER" id="PTHR10520">
    <property type="entry name" value="TRIFUNCTIONAL PURINE BIOSYNTHETIC PROTEIN ADENOSINE-3-RELATED"/>
    <property type="match status" value="1"/>
</dbReference>
<dbReference type="Pfam" id="PF00586">
    <property type="entry name" value="AIRS"/>
    <property type="match status" value="1"/>
</dbReference>
<dbReference type="Pfam" id="PF02769">
    <property type="entry name" value="AIRS_C"/>
    <property type="match status" value="1"/>
</dbReference>
<dbReference type="SUPFAM" id="SSF56042">
    <property type="entry name" value="PurM C-terminal domain-like"/>
    <property type="match status" value="1"/>
</dbReference>
<dbReference type="SUPFAM" id="SSF55326">
    <property type="entry name" value="PurM N-terminal domain-like"/>
    <property type="match status" value="1"/>
</dbReference>
<sequence length="369" mass="38418">MSKRDTSQPKTGQPKTSKRRNGLTYAEAGVDIDAGNLMVEKIKPLVRATRRPGADGEIGGFGGLFDLKAAGFTDPVLVAANDGVGTKLKIAIDAGKHDTIGIDLVAMCVNDIVVQGAEPLFFLDYFATGKLDPDQGAAIVGGIAEGCRQAGCALIGGETAEMPGMYHGNDYDLAGFAVGAAERGQLLPTDDIVEGDVLLGLASSGLHSNGFSLVRRIVAASGLAWSDPAPFNDEATLAEALLEPTRIYVKSILKAIRNTHGIKALAHITGGGFPENIPRVLPKDFSAELDLEAIDVPPVFSWLAKTGGVAPEEMMRTFNCGVGMILAVASGQAAQVAAVLQEAGETVTPIGRIVPRRDAGVIYRGSIGL</sequence>
<gene>
    <name evidence="1" type="primary">purM</name>
    <name type="ordered locus">mll7962</name>
</gene>
<feature type="chain" id="PRO_0000148238" description="Phosphoribosylformylglycinamidine cyclo-ligase">
    <location>
        <begin position="1"/>
        <end position="369"/>
    </location>
</feature>
<feature type="region of interest" description="Disordered" evidence="2">
    <location>
        <begin position="1"/>
        <end position="22"/>
    </location>
</feature>
<reference key="1">
    <citation type="journal article" date="2000" name="DNA Res.">
        <title>Complete genome structure of the nitrogen-fixing symbiotic bacterium Mesorhizobium loti.</title>
        <authorList>
            <person name="Kaneko T."/>
            <person name="Nakamura Y."/>
            <person name="Sato S."/>
            <person name="Asamizu E."/>
            <person name="Kato T."/>
            <person name="Sasamoto S."/>
            <person name="Watanabe A."/>
            <person name="Idesawa K."/>
            <person name="Ishikawa A."/>
            <person name="Kawashima K."/>
            <person name="Kimura T."/>
            <person name="Kishida Y."/>
            <person name="Kiyokawa C."/>
            <person name="Kohara M."/>
            <person name="Matsumoto M."/>
            <person name="Matsuno A."/>
            <person name="Mochizuki Y."/>
            <person name="Nakayama S."/>
            <person name="Nakazaki N."/>
            <person name="Shimpo S."/>
            <person name="Sugimoto M."/>
            <person name="Takeuchi C."/>
            <person name="Yamada M."/>
            <person name="Tabata S."/>
        </authorList>
    </citation>
    <scope>NUCLEOTIDE SEQUENCE [LARGE SCALE GENOMIC DNA]</scope>
    <source>
        <strain>LMG 29417 / CECT 9101 / MAFF 303099</strain>
    </source>
</reference>
<organism>
    <name type="scientific">Mesorhizobium japonicum (strain LMG 29417 / CECT 9101 / MAFF 303099)</name>
    <name type="common">Mesorhizobium loti (strain MAFF 303099)</name>
    <dbReference type="NCBI Taxonomy" id="266835"/>
    <lineage>
        <taxon>Bacteria</taxon>
        <taxon>Pseudomonadati</taxon>
        <taxon>Pseudomonadota</taxon>
        <taxon>Alphaproteobacteria</taxon>
        <taxon>Hyphomicrobiales</taxon>
        <taxon>Phyllobacteriaceae</taxon>
        <taxon>Mesorhizobium</taxon>
    </lineage>
</organism>
<proteinExistence type="inferred from homology"/>